<reference key="1">
    <citation type="submission" date="2007-10" db="EMBL/GenBank/DDBJ databases">
        <title>Complete sequence of Salinispora arenicola CNS-205.</title>
        <authorList>
            <consortium name="US DOE Joint Genome Institute"/>
            <person name="Copeland A."/>
            <person name="Lucas S."/>
            <person name="Lapidus A."/>
            <person name="Barry K."/>
            <person name="Glavina del Rio T."/>
            <person name="Dalin E."/>
            <person name="Tice H."/>
            <person name="Pitluck S."/>
            <person name="Foster B."/>
            <person name="Schmutz J."/>
            <person name="Larimer F."/>
            <person name="Land M."/>
            <person name="Hauser L."/>
            <person name="Kyrpides N."/>
            <person name="Ivanova N."/>
            <person name="Jensen P.R."/>
            <person name="Moore B.S."/>
            <person name="Penn K."/>
            <person name="Jenkins C."/>
            <person name="Udwary D."/>
            <person name="Xiang L."/>
            <person name="Gontang E."/>
            <person name="Richardson P."/>
        </authorList>
    </citation>
    <scope>NUCLEOTIDE SEQUENCE [LARGE SCALE GENOMIC DNA]</scope>
    <source>
        <strain>CNS-205</strain>
    </source>
</reference>
<proteinExistence type="inferred from homology"/>
<keyword id="KW-0067">ATP-binding</keyword>
<keyword id="KW-0143">Chaperone</keyword>
<keyword id="KW-0963">Cytoplasm</keyword>
<keyword id="KW-0547">Nucleotide-binding</keyword>
<keyword id="KW-0346">Stress response</keyword>
<sequence length="636" mass="71470">MSGETLEFQAEARQLLQLMVHSIYSNKDVFLRELISNASDALDKLRLASMRDKDLDVDTSDLHIAIEVDQDARTLTVRDNGIGMTRDEVVQVIGTIAKSGTAELLRKLRETTDAETSQELIGQFGVGFYAAFMVADRVVLVTRQAGEADGTHWESSGEGTYTIAPATDVPQGTAVTLHLKPVDSEDNLHDYAAEWTIRQIVKRYSDFIAHPIRMAVERPGSDDSEPTTEVQTLNSMKALWARPRDEVEPAEYHEFYKHVSHDWADPLEVVHMRGEGTFEYEALLFLPTHAPLDLFSPQGRRGVQLYVKRVFIMDDCEALMPGYLRFVKGVVDAHDLSLNISRELLQQDRQIQVVRRRLVKKVLATVKDLKANQPEKYRTFWTEFGAVVKEGLIDDTENRDSLLEILSVASTHDPAEPTDLTGYVNRMKDGQSEIYYATGENRTTIENSPHMEAFRAKGFEVLLLTDPVDEVWVERVGEYDGKTLRSVAKGQVDLDTDEERSAAEAERERQRTEYADLLTWLGSALADQVREVRLSARLTTSPACVVGDAHDVTPTLEKMYRAMGHEVPQVKRILELNPTHPLVSGLRKAREQGATEDSLTETAELLYGMALLAEGGELADPSRFTRILAERLARTL</sequence>
<accession>A8M4S6</accession>
<feature type="chain" id="PRO_1000081523" description="Chaperone protein HtpG">
    <location>
        <begin position="1"/>
        <end position="636"/>
    </location>
</feature>
<feature type="region of interest" description="A; substrate-binding" evidence="1">
    <location>
        <begin position="1"/>
        <end position="342"/>
    </location>
</feature>
<feature type="region of interest" description="B" evidence="1">
    <location>
        <begin position="343"/>
        <end position="558"/>
    </location>
</feature>
<feature type="region of interest" description="C" evidence="1">
    <location>
        <begin position="559"/>
        <end position="636"/>
    </location>
</feature>
<gene>
    <name evidence="1" type="primary">htpG</name>
    <name type="ordered locus">Sare_2657</name>
</gene>
<comment type="function">
    <text evidence="1">Molecular chaperone. Has ATPase activity.</text>
</comment>
<comment type="subunit">
    <text evidence="1">Homodimer.</text>
</comment>
<comment type="subcellular location">
    <subcellularLocation>
        <location evidence="1">Cytoplasm</location>
    </subcellularLocation>
</comment>
<comment type="similarity">
    <text evidence="1">Belongs to the heat shock protein 90 family.</text>
</comment>
<evidence type="ECO:0000255" key="1">
    <source>
        <dbReference type="HAMAP-Rule" id="MF_00505"/>
    </source>
</evidence>
<dbReference type="EMBL" id="CP000850">
    <property type="protein sequence ID" value="ABV98494.1"/>
    <property type="molecule type" value="Genomic_DNA"/>
</dbReference>
<dbReference type="SMR" id="A8M4S6"/>
<dbReference type="STRING" id="391037.Sare_2657"/>
<dbReference type="KEGG" id="saq:Sare_2657"/>
<dbReference type="PATRIC" id="fig|391037.6.peg.2692"/>
<dbReference type="eggNOG" id="COG0326">
    <property type="taxonomic scope" value="Bacteria"/>
</dbReference>
<dbReference type="HOGENOM" id="CLU_006684_3_0_11"/>
<dbReference type="OrthoDB" id="9802640at2"/>
<dbReference type="GO" id="GO:0005737">
    <property type="term" value="C:cytoplasm"/>
    <property type="evidence" value="ECO:0007669"/>
    <property type="project" value="UniProtKB-SubCell"/>
</dbReference>
<dbReference type="GO" id="GO:0005524">
    <property type="term" value="F:ATP binding"/>
    <property type="evidence" value="ECO:0007669"/>
    <property type="project" value="UniProtKB-UniRule"/>
</dbReference>
<dbReference type="GO" id="GO:0016887">
    <property type="term" value="F:ATP hydrolysis activity"/>
    <property type="evidence" value="ECO:0007669"/>
    <property type="project" value="InterPro"/>
</dbReference>
<dbReference type="GO" id="GO:0140662">
    <property type="term" value="F:ATP-dependent protein folding chaperone"/>
    <property type="evidence" value="ECO:0007669"/>
    <property type="project" value="InterPro"/>
</dbReference>
<dbReference type="GO" id="GO:0051082">
    <property type="term" value="F:unfolded protein binding"/>
    <property type="evidence" value="ECO:0007669"/>
    <property type="project" value="UniProtKB-UniRule"/>
</dbReference>
<dbReference type="CDD" id="cd16927">
    <property type="entry name" value="HATPase_Hsp90-like"/>
    <property type="match status" value="1"/>
</dbReference>
<dbReference type="FunFam" id="3.30.230.80:FF:000002">
    <property type="entry name" value="Molecular chaperone HtpG"/>
    <property type="match status" value="1"/>
</dbReference>
<dbReference type="FunFam" id="3.30.565.10:FF:000009">
    <property type="entry name" value="Molecular chaperone HtpG"/>
    <property type="match status" value="1"/>
</dbReference>
<dbReference type="Gene3D" id="3.30.230.80">
    <property type="match status" value="1"/>
</dbReference>
<dbReference type="Gene3D" id="3.40.50.11260">
    <property type="match status" value="1"/>
</dbReference>
<dbReference type="Gene3D" id="1.20.120.790">
    <property type="entry name" value="Heat shock protein 90, C-terminal domain"/>
    <property type="match status" value="1"/>
</dbReference>
<dbReference type="Gene3D" id="3.30.565.10">
    <property type="entry name" value="Histidine kinase-like ATPase, C-terminal domain"/>
    <property type="match status" value="1"/>
</dbReference>
<dbReference type="HAMAP" id="MF_00505">
    <property type="entry name" value="HSP90"/>
    <property type="match status" value="1"/>
</dbReference>
<dbReference type="InterPro" id="IPR036890">
    <property type="entry name" value="HATPase_C_sf"/>
</dbReference>
<dbReference type="InterPro" id="IPR019805">
    <property type="entry name" value="Heat_shock_protein_90_CS"/>
</dbReference>
<dbReference type="InterPro" id="IPR037196">
    <property type="entry name" value="HSP90_C"/>
</dbReference>
<dbReference type="InterPro" id="IPR001404">
    <property type="entry name" value="Hsp90_fam"/>
</dbReference>
<dbReference type="InterPro" id="IPR020575">
    <property type="entry name" value="Hsp90_N"/>
</dbReference>
<dbReference type="InterPro" id="IPR020568">
    <property type="entry name" value="Ribosomal_Su5_D2-typ_SF"/>
</dbReference>
<dbReference type="NCBIfam" id="NF003555">
    <property type="entry name" value="PRK05218.1"/>
    <property type="match status" value="1"/>
</dbReference>
<dbReference type="PANTHER" id="PTHR11528">
    <property type="entry name" value="HEAT SHOCK PROTEIN 90 FAMILY MEMBER"/>
    <property type="match status" value="1"/>
</dbReference>
<dbReference type="Pfam" id="PF13589">
    <property type="entry name" value="HATPase_c_3"/>
    <property type="match status" value="1"/>
</dbReference>
<dbReference type="Pfam" id="PF00183">
    <property type="entry name" value="HSP90"/>
    <property type="match status" value="1"/>
</dbReference>
<dbReference type="PIRSF" id="PIRSF002583">
    <property type="entry name" value="Hsp90"/>
    <property type="match status" value="1"/>
</dbReference>
<dbReference type="PRINTS" id="PR00775">
    <property type="entry name" value="HEATSHOCK90"/>
</dbReference>
<dbReference type="SMART" id="SM00387">
    <property type="entry name" value="HATPase_c"/>
    <property type="match status" value="1"/>
</dbReference>
<dbReference type="SUPFAM" id="SSF55874">
    <property type="entry name" value="ATPase domain of HSP90 chaperone/DNA topoisomerase II/histidine kinase"/>
    <property type="match status" value="1"/>
</dbReference>
<dbReference type="SUPFAM" id="SSF110942">
    <property type="entry name" value="HSP90 C-terminal domain"/>
    <property type="match status" value="1"/>
</dbReference>
<dbReference type="SUPFAM" id="SSF54211">
    <property type="entry name" value="Ribosomal protein S5 domain 2-like"/>
    <property type="match status" value="1"/>
</dbReference>
<dbReference type="PROSITE" id="PS00298">
    <property type="entry name" value="HSP90"/>
    <property type="match status" value="1"/>
</dbReference>
<name>HTPG_SALAI</name>
<organism>
    <name type="scientific">Salinispora arenicola (strain CNS-205)</name>
    <dbReference type="NCBI Taxonomy" id="391037"/>
    <lineage>
        <taxon>Bacteria</taxon>
        <taxon>Bacillati</taxon>
        <taxon>Actinomycetota</taxon>
        <taxon>Actinomycetes</taxon>
        <taxon>Micromonosporales</taxon>
        <taxon>Micromonosporaceae</taxon>
        <taxon>Salinispora</taxon>
    </lineage>
</organism>
<protein>
    <recommendedName>
        <fullName evidence="1">Chaperone protein HtpG</fullName>
    </recommendedName>
    <alternativeName>
        <fullName evidence="1">Heat shock protein HtpG</fullName>
    </alternativeName>
    <alternativeName>
        <fullName evidence="1">High temperature protein G</fullName>
    </alternativeName>
</protein>